<protein>
    <recommendedName>
        <fullName evidence="1">Transcription elongation factor Spt5</fullName>
    </recommendedName>
</protein>
<reference key="1">
    <citation type="journal article" date="1996" name="Science">
        <title>Complete genome sequence of the methanogenic archaeon, Methanococcus jannaschii.</title>
        <authorList>
            <person name="Bult C.J."/>
            <person name="White O."/>
            <person name="Olsen G.J."/>
            <person name="Zhou L."/>
            <person name="Fleischmann R.D."/>
            <person name="Sutton G.G."/>
            <person name="Blake J.A."/>
            <person name="FitzGerald L.M."/>
            <person name="Clayton R.A."/>
            <person name="Gocayne J.D."/>
            <person name="Kerlavage A.R."/>
            <person name="Dougherty B.A."/>
            <person name="Tomb J.-F."/>
            <person name="Adams M.D."/>
            <person name="Reich C.I."/>
            <person name="Overbeek R."/>
            <person name="Kirkness E.F."/>
            <person name="Weinstock K.G."/>
            <person name="Merrick J.M."/>
            <person name="Glodek A."/>
            <person name="Scott J.L."/>
            <person name="Geoghagen N.S.M."/>
            <person name="Weidman J.F."/>
            <person name="Fuhrmann J.L."/>
            <person name="Nguyen D."/>
            <person name="Utterback T.R."/>
            <person name="Kelley J.M."/>
            <person name="Peterson J.D."/>
            <person name="Sadow P.W."/>
            <person name="Hanna M.C."/>
            <person name="Cotton M.D."/>
            <person name="Roberts K.M."/>
            <person name="Hurst M.A."/>
            <person name="Kaine B.P."/>
            <person name="Borodovsky M."/>
            <person name="Klenk H.-P."/>
            <person name="Fraser C.M."/>
            <person name="Smith H.O."/>
            <person name="Woese C.R."/>
            <person name="Venter J.C."/>
        </authorList>
    </citation>
    <scope>NUCLEOTIDE SEQUENCE [LARGE SCALE GENOMIC DNA]</scope>
    <source>
        <strain>ATCC 43067 / DSM 2661 / JAL-1 / JCM 10045 / NBRC 100440</strain>
    </source>
</reference>
<reference key="2">
    <citation type="journal article" date="2009" name="Proteins">
        <title>Crystal structure of NusG N-terminal (NGN) domain from Methanocaldococcus jannaschii and its interaction with rpoE''.</title>
        <authorList>
            <person name="Zhou H."/>
            <person name="Liu Q."/>
            <person name="Gao Y."/>
            <person name="Teng M."/>
            <person name="Niu L."/>
        </authorList>
    </citation>
    <scope>X-RAY CRYSTALLOGRAPHY (2.04 ANGSTROMS) OF 1-83</scope>
    <scope>DOMAIN</scope>
    <scope>SUBUNIT</scope>
</reference>
<reference key="3">
    <citation type="journal article" date="2010" name="Nucleic Acids Res.">
        <title>Spt4/5 stimulates transcription elongation through the RNA polymerase clamp coiled-coil motif.</title>
        <authorList>
            <person name="Hirtreiter A."/>
            <person name="Damsma G.E."/>
            <person name="Cheung A.C."/>
            <person name="Klose D."/>
            <person name="Grohmann D."/>
            <person name="Vojnic E."/>
            <person name="Martin A.C."/>
            <person name="Cramer P."/>
            <person name="Werner F."/>
        </authorList>
    </citation>
    <scope>X-RAY CRYSTALLOGRAPHY (1.90 ANGSTROMS) OF 1-82</scope>
    <scope>FUNCTION</scope>
    <scope>SUBUNIT</scope>
    <scope>DOMAIN</scope>
    <scope>MUTAGENESIS OF ALA-4; TYR-42 AND LEU-44</scope>
</reference>
<sequence length="147" mass="16136">MIFAVRTMVGQEKNIAGLMASRAEKEQLDVYSILASESLKGYVLVEAETKGDVEELIKGMPRVRGIVPGTIAIEEIEPLLTPKKIIENIEKGDVVEIIAGPFKGERAKVIRVDKHKEEVTLELENAAVPIPITLPVEGVKIVSKHKD</sequence>
<proteinExistence type="evidence at protein level"/>
<gene>
    <name evidence="1" type="primary">spt5</name>
    <name type="ordered locus">MJ0372</name>
</gene>
<comment type="function">
    <text evidence="1 3">Stimulates transcription elongation.</text>
</comment>
<comment type="subunit">
    <text evidence="1 2 3">Heterodimer composed of Spt4 and Spt5. Interacts with RNA polymerase (RNAP). Forms a homodimer in solution.</text>
</comment>
<comment type="interaction">
    <interactant intactId="EBI-15739382">
        <id>Q57818</id>
    </interactant>
    <interactant intactId="EBI-15739363">
        <id>Q57839</id>
        <label>spt4</label>
    </interactant>
    <organismsDiffer>false</organismsDiffer>
    <experiments>3</experiments>
</comment>
<comment type="domain">
    <text evidence="2 3">Composed of only a NusG N-terminal (NGN) domain and a KOW domain, similar to bacterial NusG. The NGN domain is the effector domain of the complex that mediates the interaction with RNAP and is essential for elongation activity.</text>
</comment>
<comment type="similarity">
    <text evidence="1">Belongs to the archaeal Spt5 family.</text>
</comment>
<keyword id="KW-0002">3D-structure</keyword>
<keyword id="KW-1185">Reference proteome</keyword>
<keyword id="KW-0804">Transcription</keyword>
<keyword id="KW-0805">Transcription regulation</keyword>
<accession>Q57818</accession>
<evidence type="ECO:0000255" key="1">
    <source>
        <dbReference type="HAMAP-Rule" id="MF_00950"/>
    </source>
</evidence>
<evidence type="ECO:0000269" key="2">
    <source>
    </source>
</evidence>
<evidence type="ECO:0000269" key="3">
    <source>
    </source>
</evidence>
<evidence type="ECO:0007829" key="4">
    <source>
        <dbReference type="PDB" id="3LPE"/>
    </source>
</evidence>
<evidence type="ECO:0007829" key="5">
    <source>
        <dbReference type="PDB" id="4ZN3"/>
    </source>
</evidence>
<name>SPT5_METJA</name>
<organism>
    <name type="scientific">Methanocaldococcus jannaschii (strain ATCC 43067 / DSM 2661 / JAL-1 / JCM 10045 / NBRC 100440)</name>
    <name type="common">Methanococcus jannaschii</name>
    <dbReference type="NCBI Taxonomy" id="243232"/>
    <lineage>
        <taxon>Archaea</taxon>
        <taxon>Methanobacteriati</taxon>
        <taxon>Methanobacteriota</taxon>
        <taxon>Methanomada group</taxon>
        <taxon>Methanococci</taxon>
        <taxon>Methanococcales</taxon>
        <taxon>Methanocaldococcaceae</taxon>
        <taxon>Methanocaldococcus</taxon>
    </lineage>
</organism>
<dbReference type="EMBL" id="L77117">
    <property type="protein sequence ID" value="AAB98361.1"/>
    <property type="molecule type" value="Genomic_DNA"/>
</dbReference>
<dbReference type="PIR" id="D64346">
    <property type="entry name" value="D64346"/>
</dbReference>
<dbReference type="RefSeq" id="WP_010869871.1">
    <property type="nucleotide sequence ID" value="NC_000909.1"/>
</dbReference>
<dbReference type="PDB" id="3EWG">
    <property type="method" value="X-ray"/>
    <property type="resolution" value="2.04 A"/>
    <property type="chains" value="A=1-83"/>
</dbReference>
<dbReference type="PDB" id="3LPE">
    <property type="method" value="X-ray"/>
    <property type="resolution" value="1.90 A"/>
    <property type="chains" value="A/C/E/G=1-82"/>
</dbReference>
<dbReference type="PDB" id="4ZN1">
    <property type="method" value="X-ray"/>
    <property type="resolution" value="2.80 A"/>
    <property type="chains" value="A=1-147"/>
</dbReference>
<dbReference type="PDB" id="4ZN3">
    <property type="method" value="X-ray"/>
    <property type="resolution" value="2.30 A"/>
    <property type="chains" value="A=1-147"/>
</dbReference>
<dbReference type="PDBsum" id="3EWG"/>
<dbReference type="PDBsum" id="3LPE"/>
<dbReference type="PDBsum" id="4ZN1"/>
<dbReference type="PDBsum" id="4ZN3"/>
<dbReference type="BMRB" id="Q57818"/>
<dbReference type="SMR" id="Q57818"/>
<dbReference type="DIP" id="DIP-46333N"/>
<dbReference type="FunCoup" id="Q57818">
    <property type="interactions" value="1"/>
</dbReference>
<dbReference type="IntAct" id="Q57818">
    <property type="interactions" value="1"/>
</dbReference>
<dbReference type="STRING" id="243232.MJ_0372"/>
<dbReference type="PaxDb" id="243232-MJ_0372"/>
<dbReference type="EnsemblBacteria" id="AAB98361">
    <property type="protein sequence ID" value="AAB98361"/>
    <property type="gene ID" value="MJ_0372"/>
</dbReference>
<dbReference type="GeneID" id="1451229"/>
<dbReference type="KEGG" id="mja:MJ_0372"/>
<dbReference type="eggNOG" id="arCOG01920">
    <property type="taxonomic scope" value="Archaea"/>
</dbReference>
<dbReference type="HOGENOM" id="CLU_113589_0_0_2"/>
<dbReference type="InParanoid" id="Q57818"/>
<dbReference type="OrthoDB" id="371863at2157"/>
<dbReference type="PhylomeDB" id="Q57818"/>
<dbReference type="EvolutionaryTrace" id="Q57818"/>
<dbReference type="Proteomes" id="UP000000805">
    <property type="component" value="Chromosome"/>
</dbReference>
<dbReference type="GO" id="GO:0005840">
    <property type="term" value="C:ribosome"/>
    <property type="evidence" value="ECO:0007669"/>
    <property type="project" value="InterPro"/>
</dbReference>
<dbReference type="GO" id="GO:0003735">
    <property type="term" value="F:structural constituent of ribosome"/>
    <property type="evidence" value="ECO:0007669"/>
    <property type="project" value="InterPro"/>
</dbReference>
<dbReference type="GO" id="GO:0003746">
    <property type="term" value="F:translation elongation factor activity"/>
    <property type="evidence" value="ECO:0007669"/>
    <property type="project" value="InterPro"/>
</dbReference>
<dbReference type="GO" id="GO:0032784">
    <property type="term" value="P:regulation of DNA-templated transcription elongation"/>
    <property type="evidence" value="ECO:0007669"/>
    <property type="project" value="InterPro"/>
</dbReference>
<dbReference type="GO" id="GO:0006357">
    <property type="term" value="P:regulation of transcription by RNA polymerase II"/>
    <property type="evidence" value="ECO:0007669"/>
    <property type="project" value="InterPro"/>
</dbReference>
<dbReference type="GO" id="GO:0140673">
    <property type="term" value="P:transcription elongation-coupled chromatin remodeling"/>
    <property type="evidence" value="ECO:0007669"/>
    <property type="project" value="InterPro"/>
</dbReference>
<dbReference type="CDD" id="cd06091">
    <property type="entry name" value="KOW_NusG"/>
    <property type="match status" value="1"/>
</dbReference>
<dbReference type="CDD" id="cd09887">
    <property type="entry name" value="NGN_Arch"/>
    <property type="match status" value="1"/>
</dbReference>
<dbReference type="Gene3D" id="2.30.30.30">
    <property type="match status" value="1"/>
</dbReference>
<dbReference type="Gene3D" id="3.30.70.940">
    <property type="entry name" value="NusG, N-terminal domain"/>
    <property type="match status" value="1"/>
</dbReference>
<dbReference type="HAMAP" id="MF_00950">
    <property type="entry name" value="Spt5_arch"/>
    <property type="match status" value="1"/>
</dbReference>
<dbReference type="InterPro" id="IPR005824">
    <property type="entry name" value="KOW"/>
</dbReference>
<dbReference type="InterPro" id="IPR005100">
    <property type="entry name" value="NGN-domain"/>
</dbReference>
<dbReference type="InterPro" id="IPR006645">
    <property type="entry name" value="NGN-like_dom"/>
</dbReference>
<dbReference type="InterPro" id="IPR036735">
    <property type="entry name" value="NGN_dom_sf"/>
</dbReference>
<dbReference type="InterPro" id="IPR014722">
    <property type="entry name" value="Rib_uL2_dom2"/>
</dbReference>
<dbReference type="InterPro" id="IPR005825">
    <property type="entry name" value="Ribosomal_uL24_CS"/>
</dbReference>
<dbReference type="InterPro" id="IPR039659">
    <property type="entry name" value="SPT5"/>
</dbReference>
<dbReference type="InterPro" id="IPR011590">
    <property type="entry name" value="Spt5_arc"/>
</dbReference>
<dbReference type="InterPro" id="IPR008991">
    <property type="entry name" value="Translation_prot_SH3-like_sf"/>
</dbReference>
<dbReference type="NCBIfam" id="TIGR00405">
    <property type="entry name" value="KOW_elon_Spt5"/>
    <property type="match status" value="1"/>
</dbReference>
<dbReference type="PANTHER" id="PTHR11125">
    <property type="entry name" value="SUPPRESSOR OF TY 5"/>
    <property type="match status" value="1"/>
</dbReference>
<dbReference type="PANTHER" id="PTHR11125:SF7">
    <property type="entry name" value="TRANSCRIPTION ELONGATION FACTOR SPT5"/>
    <property type="match status" value="1"/>
</dbReference>
<dbReference type="Pfam" id="PF00467">
    <property type="entry name" value="KOW"/>
    <property type="match status" value="1"/>
</dbReference>
<dbReference type="Pfam" id="PF03439">
    <property type="entry name" value="Spt5-NGN"/>
    <property type="match status" value="1"/>
</dbReference>
<dbReference type="SMART" id="SM00739">
    <property type="entry name" value="KOW"/>
    <property type="match status" value="1"/>
</dbReference>
<dbReference type="SMART" id="SM00738">
    <property type="entry name" value="NGN"/>
    <property type="match status" value="1"/>
</dbReference>
<dbReference type="SUPFAM" id="SSF50104">
    <property type="entry name" value="Translation proteins SH3-like domain"/>
    <property type="match status" value="1"/>
</dbReference>
<feature type="chain" id="PRO_0000113978" description="Transcription elongation factor Spt5">
    <location>
        <begin position="1"/>
        <end position="147"/>
    </location>
</feature>
<feature type="domain" description="KOW" evidence="1">
    <location>
        <begin position="91"/>
        <end position="122"/>
    </location>
</feature>
<feature type="mutagenesis site" description="Abrogates binding to RNAP. Decreases elongation activity." evidence="3">
    <original>A</original>
    <variation>R</variation>
    <location>
        <position position="4"/>
    </location>
</feature>
<feature type="mutagenesis site" description="Abrogates binding to RNAP. Decreases elongation activity." evidence="3">
    <original>Y</original>
    <variation>A</variation>
    <location>
        <position position="42"/>
    </location>
</feature>
<feature type="mutagenesis site" description="Can still bind RNAP, but with a decreased affinity. Does not affect elongation activity." evidence="3">
    <original>L</original>
    <variation>A</variation>
    <location>
        <position position="44"/>
    </location>
</feature>
<feature type="mutagenesis site" description="Abrogates binding to RNAP. Decreases elongation activity." evidence="3">
    <original>L</original>
    <variation>R</variation>
    <location>
        <position position="44"/>
    </location>
</feature>
<feature type="strand" evidence="4">
    <location>
        <begin position="2"/>
        <end position="7"/>
    </location>
</feature>
<feature type="helix" evidence="4">
    <location>
        <begin position="12"/>
        <end position="25"/>
    </location>
</feature>
<feature type="strand" evidence="4">
    <location>
        <begin position="30"/>
        <end position="35"/>
    </location>
</feature>
<feature type="strand" evidence="4">
    <location>
        <begin position="42"/>
        <end position="49"/>
    </location>
</feature>
<feature type="helix" evidence="4">
    <location>
        <begin position="50"/>
        <end position="57"/>
    </location>
</feature>
<feature type="strand" evidence="4">
    <location>
        <begin position="63"/>
        <end position="66"/>
    </location>
</feature>
<feature type="helix" evidence="4">
    <location>
        <begin position="73"/>
        <end position="80"/>
    </location>
</feature>
<feature type="strand" evidence="5">
    <location>
        <begin position="94"/>
        <end position="97"/>
    </location>
</feature>
<feature type="turn" evidence="5">
    <location>
        <begin position="101"/>
        <end position="104"/>
    </location>
</feature>
<feature type="strand" evidence="5">
    <location>
        <begin position="106"/>
        <end position="113"/>
    </location>
</feature>
<feature type="turn" evidence="5">
    <location>
        <begin position="114"/>
        <end position="117"/>
    </location>
</feature>
<feature type="strand" evidence="5">
    <location>
        <begin position="118"/>
        <end position="124"/>
    </location>
</feature>
<feature type="strand" evidence="5">
    <location>
        <begin position="132"/>
        <end position="135"/>
    </location>
</feature>
<feature type="helix" evidence="5">
    <location>
        <begin position="136"/>
        <end position="138"/>
    </location>
</feature>
<feature type="strand" evidence="5">
    <location>
        <begin position="139"/>
        <end position="143"/>
    </location>
</feature>